<protein>
    <recommendedName>
        <fullName>Uncharacterized protein Rv2277c</fullName>
    </recommendedName>
</protein>
<sequence>MPGRFTVALVIALGGTCGVADALPLGQTDDPMIVAHRAGTRDFPENTVLAITNAVAAGVDGMWLTVQVSSDGVPVLYRPSDLATLTDGAGPVNSKTVQQLQQLNAGWNFTTPGVEGHPYRQRATPIPTLEQAIGATPPDMTLFLDLKQTPPQPLVSAVAQVLTRTGAAGRSIVYSTNADITAAASRQEGLQVAESRDVTRQRLFNMALNHHCDPQPDPGKWAGFELHRDVTVTEEFTLGSGISAVNAELWDEASVDCFRSQSGMKVMGFAVKTVDDYRLAHKIGLDAVLVDSPLAAQQWRH</sequence>
<reference key="1">
    <citation type="journal article" date="1998" name="Nature">
        <title>Deciphering the biology of Mycobacterium tuberculosis from the complete genome sequence.</title>
        <authorList>
            <person name="Cole S.T."/>
            <person name="Brosch R."/>
            <person name="Parkhill J."/>
            <person name="Garnier T."/>
            <person name="Churcher C.M."/>
            <person name="Harris D.E."/>
            <person name="Gordon S.V."/>
            <person name="Eiglmeier K."/>
            <person name="Gas S."/>
            <person name="Barry C.E. III"/>
            <person name="Tekaia F."/>
            <person name="Badcock K."/>
            <person name="Basham D."/>
            <person name="Brown D."/>
            <person name="Chillingworth T."/>
            <person name="Connor R."/>
            <person name="Davies R.M."/>
            <person name="Devlin K."/>
            <person name="Feltwell T."/>
            <person name="Gentles S."/>
            <person name="Hamlin N."/>
            <person name="Holroyd S."/>
            <person name="Hornsby T."/>
            <person name="Jagels K."/>
            <person name="Krogh A."/>
            <person name="McLean J."/>
            <person name="Moule S."/>
            <person name="Murphy L.D."/>
            <person name="Oliver S."/>
            <person name="Osborne J."/>
            <person name="Quail M.A."/>
            <person name="Rajandream M.A."/>
            <person name="Rogers J."/>
            <person name="Rutter S."/>
            <person name="Seeger K."/>
            <person name="Skelton S."/>
            <person name="Squares S."/>
            <person name="Squares R."/>
            <person name="Sulston J.E."/>
            <person name="Taylor K."/>
            <person name="Whitehead S."/>
            <person name="Barrell B.G."/>
        </authorList>
    </citation>
    <scope>NUCLEOTIDE SEQUENCE [LARGE SCALE GENOMIC DNA]</scope>
    <source>
        <strain>ATCC 25618 / H37Rv</strain>
    </source>
</reference>
<reference key="2">
    <citation type="journal article" date="2011" name="Mol. Cell. Proteomics">
        <title>Proteogenomic analysis of Mycobacterium tuberculosis by high resolution mass spectrometry.</title>
        <authorList>
            <person name="Kelkar D.S."/>
            <person name="Kumar D."/>
            <person name="Kumar P."/>
            <person name="Balakrishnan L."/>
            <person name="Muthusamy B."/>
            <person name="Yadav A.K."/>
            <person name="Shrivastava P."/>
            <person name="Marimuthu A."/>
            <person name="Anand S."/>
            <person name="Sundaram H."/>
            <person name="Kingsbury R."/>
            <person name="Harsha H.C."/>
            <person name="Nair B."/>
            <person name="Prasad T.S."/>
            <person name="Chauhan D.S."/>
            <person name="Katoch K."/>
            <person name="Katoch V.M."/>
            <person name="Kumar P."/>
            <person name="Chaerkady R."/>
            <person name="Ramachandran S."/>
            <person name="Dash D."/>
            <person name="Pandey A."/>
        </authorList>
    </citation>
    <scope>IDENTIFICATION BY MASS SPECTROMETRY [LARGE SCALE ANALYSIS]</scope>
    <source>
        <strain>ATCC 25618 / H37Rv</strain>
    </source>
</reference>
<feature type="signal peptide" evidence="1">
    <location>
        <begin position="1"/>
        <end position="22"/>
    </location>
</feature>
<feature type="chain" id="PRO_0000014127" description="Uncharacterized protein Rv2277c">
    <location>
        <begin position="23"/>
        <end position="301"/>
    </location>
</feature>
<feature type="domain" description="GP-PDE">
    <location>
        <begin position="31"/>
        <end position="300"/>
    </location>
</feature>
<feature type="strand" evidence="2">
    <location>
        <begin position="32"/>
        <end position="36"/>
    </location>
</feature>
<feature type="turn" evidence="2">
    <location>
        <begin position="37"/>
        <end position="42"/>
    </location>
</feature>
<feature type="helix" evidence="2">
    <location>
        <begin position="48"/>
        <end position="56"/>
    </location>
</feature>
<feature type="strand" evidence="2">
    <location>
        <begin position="60"/>
        <end position="68"/>
    </location>
</feature>
<feature type="strand" evidence="2">
    <location>
        <begin position="74"/>
        <end position="76"/>
    </location>
</feature>
<feature type="strand" evidence="2">
    <location>
        <begin position="79"/>
        <end position="81"/>
    </location>
</feature>
<feature type="helix" evidence="2">
    <location>
        <begin position="82"/>
        <end position="84"/>
    </location>
</feature>
<feature type="helix" evidence="2">
    <location>
        <begin position="92"/>
        <end position="94"/>
    </location>
</feature>
<feature type="helix" evidence="2">
    <location>
        <begin position="97"/>
        <end position="100"/>
    </location>
</feature>
<feature type="turn" evidence="2">
    <location>
        <begin position="105"/>
        <end position="108"/>
    </location>
</feature>
<feature type="strand" evidence="2">
    <location>
        <begin position="120"/>
        <end position="122"/>
    </location>
</feature>
<feature type="helix" evidence="2">
    <location>
        <begin position="129"/>
        <end position="134"/>
    </location>
</feature>
<feature type="strand" evidence="2">
    <location>
        <begin position="141"/>
        <end position="145"/>
    </location>
</feature>
<feature type="helix" evidence="2">
    <location>
        <begin position="154"/>
        <end position="164"/>
    </location>
</feature>
<feature type="helix" evidence="2">
    <location>
        <begin position="168"/>
        <end position="170"/>
    </location>
</feature>
<feature type="strand" evidence="2">
    <location>
        <begin position="171"/>
        <end position="174"/>
    </location>
</feature>
<feature type="helix" evidence="2">
    <location>
        <begin position="178"/>
        <end position="185"/>
    </location>
</feature>
<feature type="helix" evidence="2">
    <location>
        <begin position="196"/>
        <end position="209"/>
    </location>
</feature>
<feature type="strand" evidence="2">
    <location>
        <begin position="221"/>
        <end position="235"/>
    </location>
</feature>
<feature type="strand" evidence="2">
    <location>
        <begin position="237"/>
        <end position="247"/>
    </location>
</feature>
<feature type="helix" evidence="2">
    <location>
        <begin position="252"/>
        <end position="259"/>
    </location>
</feature>
<feature type="turn" evidence="2">
    <location>
        <begin position="260"/>
        <end position="262"/>
    </location>
</feature>
<feature type="strand" evidence="2">
    <location>
        <begin position="265"/>
        <end position="270"/>
    </location>
</feature>
<feature type="helix" evidence="2">
    <location>
        <begin position="274"/>
        <end position="283"/>
    </location>
</feature>
<feature type="strand" evidence="2">
    <location>
        <begin position="286"/>
        <end position="291"/>
    </location>
</feature>
<feature type="helix" evidence="2">
    <location>
        <begin position="293"/>
        <end position="297"/>
    </location>
</feature>
<feature type="helix" evidence="2">
    <location>
        <begin position="298"/>
        <end position="300"/>
    </location>
</feature>
<name>Y2277_MYCTU</name>
<organism>
    <name type="scientific">Mycobacterium tuberculosis (strain ATCC 25618 / H37Rv)</name>
    <dbReference type="NCBI Taxonomy" id="83332"/>
    <lineage>
        <taxon>Bacteria</taxon>
        <taxon>Bacillati</taxon>
        <taxon>Actinomycetota</taxon>
        <taxon>Actinomycetes</taxon>
        <taxon>Mycobacteriales</taxon>
        <taxon>Mycobacteriaceae</taxon>
        <taxon>Mycobacterium</taxon>
        <taxon>Mycobacterium tuberculosis complex</taxon>
    </lineage>
</organism>
<gene>
    <name type="ordered locus">Rv2277c</name>
    <name type="ORF">MTCY339.33</name>
</gene>
<accession>P9WLF1</accession>
<accession>L0T953</accession>
<accession>Q50687</accession>
<proteinExistence type="evidence at protein level"/>
<dbReference type="EMBL" id="AL123456">
    <property type="protein sequence ID" value="CCP45059.1"/>
    <property type="molecule type" value="Genomic_DNA"/>
</dbReference>
<dbReference type="PIR" id="A70731">
    <property type="entry name" value="A70731"/>
</dbReference>
<dbReference type="RefSeq" id="NP_216793.1">
    <property type="nucleotide sequence ID" value="NC_000962.3"/>
</dbReference>
<dbReference type="RefSeq" id="WP_003916971.1">
    <property type="nucleotide sequence ID" value="NZ_NVQJ01000008.1"/>
</dbReference>
<dbReference type="PDB" id="5VUG">
    <property type="method" value="X-ray"/>
    <property type="resolution" value="1.50 A"/>
    <property type="chains" value="A=24-301"/>
</dbReference>
<dbReference type="PDBsum" id="5VUG"/>
<dbReference type="SMR" id="P9WLF1"/>
<dbReference type="STRING" id="83332.Rv2277c"/>
<dbReference type="PaxDb" id="83332-Rv2277c"/>
<dbReference type="DNASU" id="888498"/>
<dbReference type="GeneID" id="888498"/>
<dbReference type="KEGG" id="mtu:Rv2277c"/>
<dbReference type="KEGG" id="mtv:RVBD_2277c"/>
<dbReference type="TubercuList" id="Rv2277c"/>
<dbReference type="eggNOG" id="COG0584">
    <property type="taxonomic scope" value="Bacteria"/>
</dbReference>
<dbReference type="InParanoid" id="P9WLF1"/>
<dbReference type="OrthoDB" id="5241788at2"/>
<dbReference type="PhylomeDB" id="P9WLF1"/>
<dbReference type="Proteomes" id="UP000001584">
    <property type="component" value="Chromosome"/>
</dbReference>
<dbReference type="GO" id="GO:0008081">
    <property type="term" value="F:phosphoric diester hydrolase activity"/>
    <property type="evidence" value="ECO:0007669"/>
    <property type="project" value="InterPro"/>
</dbReference>
<dbReference type="GO" id="GO:0006629">
    <property type="term" value="P:lipid metabolic process"/>
    <property type="evidence" value="ECO:0007669"/>
    <property type="project" value="InterPro"/>
</dbReference>
<dbReference type="CDD" id="cd08580">
    <property type="entry name" value="GDPD_Rv2277c_like"/>
    <property type="match status" value="1"/>
</dbReference>
<dbReference type="Gene3D" id="3.20.20.190">
    <property type="entry name" value="Phosphatidylinositol (PI) phosphodiesterase"/>
    <property type="match status" value="1"/>
</dbReference>
<dbReference type="InterPro" id="IPR030395">
    <property type="entry name" value="GP_PDE_dom"/>
</dbReference>
<dbReference type="InterPro" id="IPR017946">
    <property type="entry name" value="PLC-like_Pdiesterase_TIM-brl"/>
</dbReference>
<dbReference type="PANTHER" id="PTHR46211:SF10">
    <property type="entry name" value="EXPORTED PROTEIN"/>
    <property type="match status" value="1"/>
</dbReference>
<dbReference type="PANTHER" id="PTHR46211">
    <property type="entry name" value="GLYCEROPHOSPHORYL DIESTER PHOSPHODIESTERASE"/>
    <property type="match status" value="1"/>
</dbReference>
<dbReference type="Pfam" id="PF03009">
    <property type="entry name" value="GDPD"/>
    <property type="match status" value="1"/>
</dbReference>
<dbReference type="SUPFAM" id="SSF51695">
    <property type="entry name" value="PLC-like phosphodiesterases"/>
    <property type="match status" value="1"/>
</dbReference>
<dbReference type="PROSITE" id="PS51704">
    <property type="entry name" value="GP_PDE"/>
    <property type="match status" value="1"/>
</dbReference>
<evidence type="ECO:0000255" key="1"/>
<evidence type="ECO:0007829" key="2">
    <source>
        <dbReference type="PDB" id="5VUG"/>
    </source>
</evidence>
<keyword id="KW-0002">3D-structure</keyword>
<keyword id="KW-1185">Reference proteome</keyword>
<keyword id="KW-0732">Signal</keyword>